<evidence type="ECO:0000255" key="1">
    <source>
        <dbReference type="HAMAP-Rule" id="MF_00391"/>
    </source>
</evidence>
<evidence type="ECO:0000305" key="2"/>
<sequence length="44" mass="5182">MKRTFQPTVLKRKRTHGFRARMATKNGRATINARRAKGRKRLSK</sequence>
<feature type="chain" id="PRO_1000196140" description="Large ribosomal subunit protein bL34">
    <location>
        <begin position="1"/>
        <end position="44"/>
    </location>
</feature>
<reference key="1">
    <citation type="submission" date="2009-02" db="EMBL/GenBank/DDBJ databases">
        <title>Vibrio splendidus str. LGP32 complete genome.</title>
        <authorList>
            <person name="Mazel D."/>
            <person name="Le Roux F."/>
        </authorList>
    </citation>
    <scope>NUCLEOTIDE SEQUENCE [LARGE SCALE GENOMIC DNA]</scope>
    <source>
        <strain>LGP32</strain>
    </source>
</reference>
<gene>
    <name evidence="1" type="primary">rpmH</name>
    <name type="ordered locus">VS_0006</name>
</gene>
<keyword id="KW-0687">Ribonucleoprotein</keyword>
<keyword id="KW-0689">Ribosomal protein</keyword>
<organism>
    <name type="scientific">Vibrio atlanticus (strain LGP32)</name>
    <name type="common">Vibrio splendidus (strain Mel32)</name>
    <dbReference type="NCBI Taxonomy" id="575788"/>
    <lineage>
        <taxon>Bacteria</taxon>
        <taxon>Pseudomonadati</taxon>
        <taxon>Pseudomonadota</taxon>
        <taxon>Gammaproteobacteria</taxon>
        <taxon>Vibrionales</taxon>
        <taxon>Vibrionaceae</taxon>
        <taxon>Vibrio</taxon>
    </lineage>
</organism>
<accession>B7VGI0</accession>
<proteinExistence type="inferred from homology"/>
<protein>
    <recommendedName>
        <fullName evidence="1">Large ribosomal subunit protein bL34</fullName>
    </recommendedName>
    <alternativeName>
        <fullName evidence="2">50S ribosomal protein L34</fullName>
    </alternativeName>
</protein>
<comment type="similarity">
    <text evidence="1">Belongs to the bacterial ribosomal protein bL34 family.</text>
</comment>
<dbReference type="EMBL" id="FM954972">
    <property type="protein sequence ID" value="CAV17063.1"/>
    <property type="molecule type" value="Genomic_DNA"/>
</dbReference>
<dbReference type="SMR" id="B7VGI0"/>
<dbReference type="STRING" id="575788.VS_0006"/>
<dbReference type="KEGG" id="vsp:VS_0006"/>
<dbReference type="eggNOG" id="COG0230">
    <property type="taxonomic scope" value="Bacteria"/>
</dbReference>
<dbReference type="HOGENOM" id="CLU_129938_2_0_6"/>
<dbReference type="Proteomes" id="UP000009100">
    <property type="component" value="Chromosome 1"/>
</dbReference>
<dbReference type="GO" id="GO:1990904">
    <property type="term" value="C:ribonucleoprotein complex"/>
    <property type="evidence" value="ECO:0007669"/>
    <property type="project" value="UniProtKB-KW"/>
</dbReference>
<dbReference type="GO" id="GO:0005840">
    <property type="term" value="C:ribosome"/>
    <property type="evidence" value="ECO:0007669"/>
    <property type="project" value="UniProtKB-KW"/>
</dbReference>
<dbReference type="GO" id="GO:0003735">
    <property type="term" value="F:structural constituent of ribosome"/>
    <property type="evidence" value="ECO:0007669"/>
    <property type="project" value="InterPro"/>
</dbReference>
<dbReference type="GO" id="GO:0006412">
    <property type="term" value="P:translation"/>
    <property type="evidence" value="ECO:0007669"/>
    <property type="project" value="UniProtKB-UniRule"/>
</dbReference>
<dbReference type="FunFam" id="1.10.287.3980:FF:000001">
    <property type="entry name" value="Mitochondrial ribosomal protein L34"/>
    <property type="match status" value="1"/>
</dbReference>
<dbReference type="Gene3D" id="1.10.287.3980">
    <property type="match status" value="1"/>
</dbReference>
<dbReference type="HAMAP" id="MF_00391">
    <property type="entry name" value="Ribosomal_bL34"/>
    <property type="match status" value="1"/>
</dbReference>
<dbReference type="InterPro" id="IPR000271">
    <property type="entry name" value="Ribosomal_bL34"/>
</dbReference>
<dbReference type="InterPro" id="IPR020939">
    <property type="entry name" value="Ribosomal_bL34_CS"/>
</dbReference>
<dbReference type="NCBIfam" id="TIGR01030">
    <property type="entry name" value="rpmH_bact"/>
    <property type="match status" value="1"/>
</dbReference>
<dbReference type="PANTHER" id="PTHR14503:SF4">
    <property type="entry name" value="LARGE RIBOSOMAL SUBUNIT PROTEIN BL34M"/>
    <property type="match status" value="1"/>
</dbReference>
<dbReference type="PANTHER" id="PTHR14503">
    <property type="entry name" value="MITOCHONDRIAL RIBOSOMAL PROTEIN 34 FAMILY MEMBER"/>
    <property type="match status" value="1"/>
</dbReference>
<dbReference type="Pfam" id="PF00468">
    <property type="entry name" value="Ribosomal_L34"/>
    <property type="match status" value="1"/>
</dbReference>
<dbReference type="PROSITE" id="PS00784">
    <property type="entry name" value="RIBOSOMAL_L34"/>
    <property type="match status" value="1"/>
</dbReference>
<name>RL34_VIBA3</name>